<proteinExistence type="inferred from homology"/>
<keyword id="KW-0028">Amino-acid biosynthesis</keyword>
<keyword id="KW-0963">Cytoplasm</keyword>
<keyword id="KW-0220">Diaminopimelate biosynthesis</keyword>
<keyword id="KW-0457">Lysine biosynthesis</keyword>
<keyword id="KW-0520">NAD</keyword>
<keyword id="KW-0521">NADP</keyword>
<keyword id="KW-0560">Oxidoreductase</keyword>
<gene>
    <name evidence="1" type="primary">dapB</name>
    <name type="ordered locus">GFO_0803</name>
</gene>
<accession>A0LZI4</accession>
<reference key="1">
    <citation type="journal article" date="2006" name="Environ. Microbiol.">
        <title>Whole genome analysis of the marine Bacteroidetes'Gramella forsetii' reveals adaptations to degradation of polymeric organic matter.</title>
        <authorList>
            <person name="Bauer M."/>
            <person name="Kube M."/>
            <person name="Teeling H."/>
            <person name="Richter M."/>
            <person name="Lombardot T."/>
            <person name="Allers E."/>
            <person name="Wuerdemann C.A."/>
            <person name="Quast C."/>
            <person name="Kuhl H."/>
            <person name="Knaust F."/>
            <person name="Woebken D."/>
            <person name="Bischof K."/>
            <person name="Mussmann M."/>
            <person name="Choudhuri J.V."/>
            <person name="Meyer F."/>
            <person name="Reinhardt R."/>
            <person name="Amann R.I."/>
            <person name="Gloeckner F.O."/>
        </authorList>
    </citation>
    <scope>NUCLEOTIDE SEQUENCE [LARGE SCALE GENOMIC DNA]</scope>
    <source>
        <strain>DSM 17595 / CGMCC 1.15422 / KT0803</strain>
    </source>
</reference>
<evidence type="ECO:0000255" key="1">
    <source>
        <dbReference type="HAMAP-Rule" id="MF_00102"/>
    </source>
</evidence>
<evidence type="ECO:0000305" key="2"/>
<organism>
    <name type="scientific">Christiangramia forsetii (strain DSM 17595 / CGMCC 1.15422 / KT0803)</name>
    <name type="common">Gramella forsetii</name>
    <dbReference type="NCBI Taxonomy" id="411154"/>
    <lineage>
        <taxon>Bacteria</taxon>
        <taxon>Pseudomonadati</taxon>
        <taxon>Bacteroidota</taxon>
        <taxon>Flavobacteriia</taxon>
        <taxon>Flavobacteriales</taxon>
        <taxon>Flavobacteriaceae</taxon>
        <taxon>Christiangramia</taxon>
    </lineage>
</organism>
<dbReference type="EC" id="1.17.1.8" evidence="1"/>
<dbReference type="EMBL" id="CU207366">
    <property type="protein sequence ID" value="CAL65779.1"/>
    <property type="molecule type" value="Genomic_DNA"/>
</dbReference>
<dbReference type="RefSeq" id="WP_011708716.1">
    <property type="nucleotide sequence ID" value="NC_008571.1"/>
</dbReference>
<dbReference type="SMR" id="A0LZI4"/>
<dbReference type="STRING" id="411154.GFO_0803"/>
<dbReference type="KEGG" id="gfo:GFO_0803"/>
<dbReference type="eggNOG" id="COG0289">
    <property type="taxonomic scope" value="Bacteria"/>
</dbReference>
<dbReference type="HOGENOM" id="CLU_047479_1_0_10"/>
<dbReference type="OrthoDB" id="9790352at2"/>
<dbReference type="UniPathway" id="UPA00034">
    <property type="reaction ID" value="UER00018"/>
</dbReference>
<dbReference type="Proteomes" id="UP000000755">
    <property type="component" value="Chromosome"/>
</dbReference>
<dbReference type="GO" id="GO:0005829">
    <property type="term" value="C:cytosol"/>
    <property type="evidence" value="ECO:0007669"/>
    <property type="project" value="TreeGrafter"/>
</dbReference>
<dbReference type="GO" id="GO:0008839">
    <property type="term" value="F:4-hydroxy-tetrahydrodipicolinate reductase"/>
    <property type="evidence" value="ECO:0007669"/>
    <property type="project" value="UniProtKB-EC"/>
</dbReference>
<dbReference type="GO" id="GO:0051287">
    <property type="term" value="F:NAD binding"/>
    <property type="evidence" value="ECO:0007669"/>
    <property type="project" value="UniProtKB-UniRule"/>
</dbReference>
<dbReference type="GO" id="GO:0050661">
    <property type="term" value="F:NADP binding"/>
    <property type="evidence" value="ECO:0007669"/>
    <property type="project" value="UniProtKB-UniRule"/>
</dbReference>
<dbReference type="GO" id="GO:0016726">
    <property type="term" value="F:oxidoreductase activity, acting on CH or CH2 groups, NAD or NADP as acceptor"/>
    <property type="evidence" value="ECO:0007669"/>
    <property type="project" value="UniProtKB-UniRule"/>
</dbReference>
<dbReference type="GO" id="GO:0019877">
    <property type="term" value="P:diaminopimelate biosynthetic process"/>
    <property type="evidence" value="ECO:0007669"/>
    <property type="project" value="UniProtKB-UniRule"/>
</dbReference>
<dbReference type="GO" id="GO:0009089">
    <property type="term" value="P:lysine biosynthetic process via diaminopimelate"/>
    <property type="evidence" value="ECO:0007669"/>
    <property type="project" value="UniProtKB-UniRule"/>
</dbReference>
<dbReference type="CDD" id="cd02274">
    <property type="entry name" value="DHDPR_N"/>
    <property type="match status" value="1"/>
</dbReference>
<dbReference type="Gene3D" id="3.30.360.10">
    <property type="entry name" value="Dihydrodipicolinate Reductase, domain 2"/>
    <property type="match status" value="1"/>
</dbReference>
<dbReference type="Gene3D" id="3.40.50.720">
    <property type="entry name" value="NAD(P)-binding Rossmann-like Domain"/>
    <property type="match status" value="1"/>
</dbReference>
<dbReference type="HAMAP" id="MF_00102">
    <property type="entry name" value="DapB"/>
    <property type="match status" value="1"/>
</dbReference>
<dbReference type="InterPro" id="IPR022663">
    <property type="entry name" value="DapB_C"/>
</dbReference>
<dbReference type="InterPro" id="IPR000846">
    <property type="entry name" value="DapB_N"/>
</dbReference>
<dbReference type="InterPro" id="IPR022664">
    <property type="entry name" value="DapB_N_CS"/>
</dbReference>
<dbReference type="InterPro" id="IPR023940">
    <property type="entry name" value="DHDPR_bac"/>
</dbReference>
<dbReference type="InterPro" id="IPR036291">
    <property type="entry name" value="NAD(P)-bd_dom_sf"/>
</dbReference>
<dbReference type="NCBIfam" id="TIGR00036">
    <property type="entry name" value="dapB"/>
    <property type="match status" value="1"/>
</dbReference>
<dbReference type="PANTHER" id="PTHR20836:SF0">
    <property type="entry name" value="4-HYDROXY-TETRAHYDRODIPICOLINATE REDUCTASE 1, CHLOROPLASTIC-RELATED"/>
    <property type="match status" value="1"/>
</dbReference>
<dbReference type="PANTHER" id="PTHR20836">
    <property type="entry name" value="DIHYDRODIPICOLINATE REDUCTASE"/>
    <property type="match status" value="1"/>
</dbReference>
<dbReference type="Pfam" id="PF05173">
    <property type="entry name" value="DapB_C"/>
    <property type="match status" value="1"/>
</dbReference>
<dbReference type="Pfam" id="PF01113">
    <property type="entry name" value="DapB_N"/>
    <property type="match status" value="1"/>
</dbReference>
<dbReference type="PIRSF" id="PIRSF000161">
    <property type="entry name" value="DHPR"/>
    <property type="match status" value="1"/>
</dbReference>
<dbReference type="SUPFAM" id="SSF55347">
    <property type="entry name" value="Glyceraldehyde-3-phosphate dehydrogenase-like, C-terminal domain"/>
    <property type="match status" value="1"/>
</dbReference>
<dbReference type="SUPFAM" id="SSF51735">
    <property type="entry name" value="NAD(P)-binding Rossmann-fold domains"/>
    <property type="match status" value="1"/>
</dbReference>
<dbReference type="PROSITE" id="PS01298">
    <property type="entry name" value="DAPB"/>
    <property type="match status" value="1"/>
</dbReference>
<sequence length="239" mass="26802">MNIALLGYGRMGQTIEEISKNRDHKIVFKLDDDIENHDLNDFEIDVAIDFSVPKAAFKNITTCFKHAIPVVSGTTGWLDDYAKAREICKKEDSAFIYASNFSLGVNVFFELNQKLAGMMQGLEDYSVDIEEIHHLQKLDSPSGTAITLAQQILEQNSKLKGWQLDEADEDEIPIHAKREENVPGTHTVTYESSIDKIEITHTAKSRQGFALGAVVAAEYLKDKTGIFTMKDVLSDLFKN</sequence>
<name>DAPB_CHRFK</name>
<comment type="function">
    <text evidence="1">Catalyzes the conversion of 4-hydroxy-tetrahydrodipicolinate (HTPA) to tetrahydrodipicolinate.</text>
</comment>
<comment type="catalytic activity">
    <reaction evidence="1">
        <text>(S)-2,3,4,5-tetrahydrodipicolinate + NAD(+) + H2O = (2S,4S)-4-hydroxy-2,3,4,5-tetrahydrodipicolinate + NADH + H(+)</text>
        <dbReference type="Rhea" id="RHEA:35323"/>
        <dbReference type="ChEBI" id="CHEBI:15377"/>
        <dbReference type="ChEBI" id="CHEBI:15378"/>
        <dbReference type="ChEBI" id="CHEBI:16845"/>
        <dbReference type="ChEBI" id="CHEBI:57540"/>
        <dbReference type="ChEBI" id="CHEBI:57945"/>
        <dbReference type="ChEBI" id="CHEBI:67139"/>
        <dbReference type="EC" id="1.17.1.8"/>
    </reaction>
</comment>
<comment type="catalytic activity">
    <reaction evidence="1">
        <text>(S)-2,3,4,5-tetrahydrodipicolinate + NADP(+) + H2O = (2S,4S)-4-hydroxy-2,3,4,5-tetrahydrodipicolinate + NADPH + H(+)</text>
        <dbReference type="Rhea" id="RHEA:35331"/>
        <dbReference type="ChEBI" id="CHEBI:15377"/>
        <dbReference type="ChEBI" id="CHEBI:15378"/>
        <dbReference type="ChEBI" id="CHEBI:16845"/>
        <dbReference type="ChEBI" id="CHEBI:57783"/>
        <dbReference type="ChEBI" id="CHEBI:58349"/>
        <dbReference type="ChEBI" id="CHEBI:67139"/>
        <dbReference type="EC" id="1.17.1.8"/>
    </reaction>
</comment>
<comment type="pathway">
    <text evidence="1">Amino-acid biosynthesis; L-lysine biosynthesis via DAP pathway; (S)-tetrahydrodipicolinate from L-aspartate: step 4/4.</text>
</comment>
<comment type="subcellular location">
    <subcellularLocation>
        <location evidence="1">Cytoplasm</location>
    </subcellularLocation>
</comment>
<comment type="similarity">
    <text evidence="1">Belongs to the DapB family.</text>
</comment>
<comment type="caution">
    <text evidence="2">Was originally thought to be a dihydrodipicolinate reductase (DHDPR), catalyzing the conversion of dihydrodipicolinate to tetrahydrodipicolinate. However, it was shown in E.coli that the substrate of the enzymatic reaction is not dihydrodipicolinate (DHDP) but in fact (2S,4S)-4-hydroxy-2,3,4,5-tetrahydrodipicolinic acid (HTPA), the product released by the DapA-catalyzed reaction.</text>
</comment>
<protein>
    <recommendedName>
        <fullName evidence="1">4-hydroxy-tetrahydrodipicolinate reductase</fullName>
        <shortName evidence="1">HTPA reductase</shortName>
        <ecNumber evidence="1">1.17.1.8</ecNumber>
    </recommendedName>
</protein>
<feature type="chain" id="PRO_1000093973" description="4-hydroxy-tetrahydrodipicolinate reductase">
    <location>
        <begin position="1"/>
        <end position="239"/>
    </location>
</feature>
<feature type="active site" description="Proton donor/acceptor" evidence="1">
    <location>
        <position position="133"/>
    </location>
</feature>
<feature type="active site" description="Proton donor" evidence="1">
    <location>
        <position position="137"/>
    </location>
</feature>
<feature type="binding site" evidence="1">
    <location>
        <position position="32"/>
    </location>
    <ligand>
        <name>NAD(+)</name>
        <dbReference type="ChEBI" id="CHEBI:57540"/>
    </ligand>
</feature>
<feature type="binding site" evidence="1">
    <location>
        <begin position="73"/>
        <end position="75"/>
    </location>
    <ligand>
        <name>NAD(+)</name>
        <dbReference type="ChEBI" id="CHEBI:57540"/>
    </ligand>
</feature>
<feature type="binding site" evidence="1">
    <location>
        <begin position="98"/>
        <end position="101"/>
    </location>
    <ligand>
        <name>NAD(+)</name>
        <dbReference type="ChEBI" id="CHEBI:57540"/>
    </ligand>
</feature>
<feature type="binding site" evidence="1">
    <location>
        <position position="134"/>
    </location>
    <ligand>
        <name>(S)-2,3,4,5-tetrahydrodipicolinate</name>
        <dbReference type="ChEBI" id="CHEBI:16845"/>
    </ligand>
</feature>
<feature type="binding site" evidence="1">
    <location>
        <begin position="143"/>
        <end position="144"/>
    </location>
    <ligand>
        <name>(S)-2,3,4,5-tetrahydrodipicolinate</name>
        <dbReference type="ChEBI" id="CHEBI:16845"/>
    </ligand>
</feature>